<gene>
    <name type="primary">MT-CYB</name>
    <name type="synonym">COB</name>
    <name type="synonym">CYTB</name>
    <name type="synonym">MTCYB</name>
</gene>
<name>CYB_NUMME</name>
<feature type="chain" id="PRO_0000061284" description="Cytochrome b">
    <location>
        <begin position="1"/>
        <end position="380"/>
    </location>
</feature>
<feature type="transmembrane region" description="Helical" evidence="2">
    <location>
        <begin position="34"/>
        <end position="54"/>
    </location>
</feature>
<feature type="transmembrane region" description="Helical" evidence="2">
    <location>
        <begin position="78"/>
        <end position="99"/>
    </location>
</feature>
<feature type="transmembrane region" description="Helical" evidence="2">
    <location>
        <begin position="114"/>
        <end position="134"/>
    </location>
</feature>
<feature type="transmembrane region" description="Helical" evidence="2">
    <location>
        <begin position="179"/>
        <end position="199"/>
    </location>
</feature>
<feature type="transmembrane region" description="Helical" evidence="2">
    <location>
        <begin position="227"/>
        <end position="247"/>
    </location>
</feature>
<feature type="transmembrane region" description="Helical" evidence="2">
    <location>
        <begin position="289"/>
        <end position="309"/>
    </location>
</feature>
<feature type="transmembrane region" description="Helical" evidence="2">
    <location>
        <begin position="321"/>
        <end position="341"/>
    </location>
</feature>
<feature type="transmembrane region" description="Helical" evidence="2">
    <location>
        <begin position="348"/>
        <end position="368"/>
    </location>
</feature>
<feature type="binding site" description="axial binding residue" evidence="2">
    <location>
        <position position="84"/>
    </location>
    <ligand>
        <name>heme b</name>
        <dbReference type="ChEBI" id="CHEBI:60344"/>
        <label>b562</label>
    </ligand>
    <ligandPart>
        <name>Fe</name>
        <dbReference type="ChEBI" id="CHEBI:18248"/>
    </ligandPart>
</feature>
<feature type="binding site" description="axial binding residue" evidence="2">
    <location>
        <position position="98"/>
    </location>
    <ligand>
        <name>heme b</name>
        <dbReference type="ChEBI" id="CHEBI:60344"/>
        <label>b566</label>
    </ligand>
    <ligandPart>
        <name>Fe</name>
        <dbReference type="ChEBI" id="CHEBI:18248"/>
    </ligandPart>
</feature>
<feature type="binding site" description="axial binding residue" evidence="2">
    <location>
        <position position="183"/>
    </location>
    <ligand>
        <name>heme b</name>
        <dbReference type="ChEBI" id="CHEBI:60344"/>
        <label>b562</label>
    </ligand>
    <ligandPart>
        <name>Fe</name>
        <dbReference type="ChEBI" id="CHEBI:18248"/>
    </ligandPart>
</feature>
<feature type="binding site" description="axial binding residue" evidence="2">
    <location>
        <position position="197"/>
    </location>
    <ligand>
        <name>heme b</name>
        <dbReference type="ChEBI" id="CHEBI:60344"/>
        <label>b566</label>
    </ligand>
    <ligandPart>
        <name>Fe</name>
        <dbReference type="ChEBI" id="CHEBI:18248"/>
    </ligandPart>
</feature>
<feature type="binding site" evidence="2">
    <location>
        <position position="202"/>
    </location>
    <ligand>
        <name>a ubiquinone</name>
        <dbReference type="ChEBI" id="CHEBI:16389"/>
    </ligand>
</feature>
<dbReference type="EMBL" id="L08383">
    <property type="protein sequence ID" value="AAA18848.1"/>
    <property type="molecule type" value="Genomic_DNA"/>
</dbReference>
<dbReference type="SMR" id="Q35160"/>
<dbReference type="STRING" id="8996.ENSNMEP00000000013"/>
<dbReference type="GO" id="GO:0005743">
    <property type="term" value="C:mitochondrial inner membrane"/>
    <property type="evidence" value="ECO:0007669"/>
    <property type="project" value="UniProtKB-SubCell"/>
</dbReference>
<dbReference type="GO" id="GO:0045275">
    <property type="term" value="C:respiratory chain complex III"/>
    <property type="evidence" value="ECO:0007669"/>
    <property type="project" value="InterPro"/>
</dbReference>
<dbReference type="GO" id="GO:0046872">
    <property type="term" value="F:metal ion binding"/>
    <property type="evidence" value="ECO:0007669"/>
    <property type="project" value="UniProtKB-KW"/>
</dbReference>
<dbReference type="GO" id="GO:0008121">
    <property type="term" value="F:ubiquinol-cytochrome-c reductase activity"/>
    <property type="evidence" value="ECO:0007669"/>
    <property type="project" value="InterPro"/>
</dbReference>
<dbReference type="GO" id="GO:0006122">
    <property type="term" value="P:mitochondrial electron transport, ubiquinol to cytochrome c"/>
    <property type="evidence" value="ECO:0007669"/>
    <property type="project" value="TreeGrafter"/>
</dbReference>
<dbReference type="CDD" id="cd00290">
    <property type="entry name" value="cytochrome_b_C"/>
    <property type="match status" value="1"/>
</dbReference>
<dbReference type="CDD" id="cd00284">
    <property type="entry name" value="Cytochrome_b_N"/>
    <property type="match status" value="1"/>
</dbReference>
<dbReference type="FunFam" id="1.20.810.10:FF:000002">
    <property type="entry name" value="Cytochrome b"/>
    <property type="match status" value="1"/>
</dbReference>
<dbReference type="Gene3D" id="1.20.810.10">
    <property type="entry name" value="Cytochrome Bc1 Complex, Chain C"/>
    <property type="match status" value="1"/>
</dbReference>
<dbReference type="InterPro" id="IPR005798">
    <property type="entry name" value="Cyt_b/b6_C"/>
</dbReference>
<dbReference type="InterPro" id="IPR036150">
    <property type="entry name" value="Cyt_b/b6_C_sf"/>
</dbReference>
<dbReference type="InterPro" id="IPR005797">
    <property type="entry name" value="Cyt_b/b6_N"/>
</dbReference>
<dbReference type="InterPro" id="IPR027387">
    <property type="entry name" value="Cytb/b6-like_sf"/>
</dbReference>
<dbReference type="InterPro" id="IPR030689">
    <property type="entry name" value="Cytochrome_b"/>
</dbReference>
<dbReference type="InterPro" id="IPR048260">
    <property type="entry name" value="Cytochrome_b_C_euk/bac"/>
</dbReference>
<dbReference type="InterPro" id="IPR048259">
    <property type="entry name" value="Cytochrome_b_N_euk/bac"/>
</dbReference>
<dbReference type="InterPro" id="IPR016174">
    <property type="entry name" value="Di-haem_cyt_TM"/>
</dbReference>
<dbReference type="PANTHER" id="PTHR19271">
    <property type="entry name" value="CYTOCHROME B"/>
    <property type="match status" value="1"/>
</dbReference>
<dbReference type="PANTHER" id="PTHR19271:SF16">
    <property type="entry name" value="CYTOCHROME B"/>
    <property type="match status" value="1"/>
</dbReference>
<dbReference type="Pfam" id="PF00032">
    <property type="entry name" value="Cytochrom_B_C"/>
    <property type="match status" value="1"/>
</dbReference>
<dbReference type="Pfam" id="PF00033">
    <property type="entry name" value="Cytochrome_B"/>
    <property type="match status" value="1"/>
</dbReference>
<dbReference type="PIRSF" id="PIRSF038885">
    <property type="entry name" value="COB"/>
    <property type="match status" value="1"/>
</dbReference>
<dbReference type="SUPFAM" id="SSF81648">
    <property type="entry name" value="a domain/subunit of cytochrome bc1 complex (Ubiquinol-cytochrome c reductase)"/>
    <property type="match status" value="1"/>
</dbReference>
<dbReference type="SUPFAM" id="SSF81342">
    <property type="entry name" value="Transmembrane di-heme cytochromes"/>
    <property type="match status" value="1"/>
</dbReference>
<dbReference type="PROSITE" id="PS51003">
    <property type="entry name" value="CYTB_CTER"/>
    <property type="match status" value="1"/>
</dbReference>
<dbReference type="PROSITE" id="PS51002">
    <property type="entry name" value="CYTB_NTER"/>
    <property type="match status" value="1"/>
</dbReference>
<comment type="function">
    <text evidence="2">Component of the ubiquinol-cytochrome c reductase complex (complex III or cytochrome b-c1 complex) that is part of the mitochondrial respiratory chain. The b-c1 complex mediates electron transfer from ubiquinol to cytochrome c. Contributes to the generation of a proton gradient across the mitochondrial membrane that is then used for ATP synthesis.</text>
</comment>
<comment type="cofactor">
    <cofactor evidence="2">
        <name>heme b</name>
        <dbReference type="ChEBI" id="CHEBI:60344"/>
    </cofactor>
    <text evidence="2">Binds 2 heme b groups non-covalently.</text>
</comment>
<comment type="subunit">
    <text evidence="2">The cytochrome bc1 complex contains 11 subunits: 3 respiratory subunits (MT-CYB, CYC1 and UQCRFS1), 2 core proteins (UQCRC1 and UQCRC2) and 6 low-molecular weight proteins (UQCRH/QCR6, UQCRB/QCR7, UQCRQ/QCR8, UQCR10/QCR9, UQCR11/QCR10 and a cleavage product of UQCRFS1). This cytochrome bc1 complex then forms a dimer.</text>
</comment>
<comment type="subcellular location">
    <subcellularLocation>
        <location evidence="2">Mitochondrion inner membrane</location>
        <topology evidence="2">Multi-pass membrane protein</topology>
    </subcellularLocation>
</comment>
<comment type="miscellaneous">
    <text evidence="1">Heme 1 (or BL or b562) is low-potential and absorbs at about 562 nm, and heme 2 (or BH or b566) is high-potential and absorbs at about 566 nm.</text>
</comment>
<comment type="similarity">
    <text evidence="3 4">Belongs to the cytochrome b family.</text>
</comment>
<comment type="caution">
    <text evidence="2">The full-length protein contains only eight transmembrane helices, not nine as predicted by bioinformatics tools.</text>
</comment>
<accession>Q35160</accession>
<protein>
    <recommendedName>
        <fullName>Cytochrome b</fullName>
    </recommendedName>
    <alternativeName>
        <fullName>Complex III subunit 3</fullName>
    </alternativeName>
    <alternativeName>
        <fullName>Complex III subunit III</fullName>
    </alternativeName>
    <alternativeName>
        <fullName>Cytochrome b-c1 complex subunit 3</fullName>
    </alternativeName>
    <alternativeName>
        <fullName>Ubiquinol-cytochrome-c reductase complex cytochrome b subunit</fullName>
    </alternativeName>
</protein>
<geneLocation type="mitochondrion"/>
<organism>
    <name type="scientific">Numida meleagris</name>
    <name type="common">Helmeted guineafowl</name>
    <name type="synonym">Phasianus meleagris</name>
    <dbReference type="NCBI Taxonomy" id="8996"/>
    <lineage>
        <taxon>Eukaryota</taxon>
        <taxon>Metazoa</taxon>
        <taxon>Chordata</taxon>
        <taxon>Craniata</taxon>
        <taxon>Vertebrata</taxon>
        <taxon>Euteleostomi</taxon>
        <taxon>Archelosauria</taxon>
        <taxon>Archosauria</taxon>
        <taxon>Dinosauria</taxon>
        <taxon>Saurischia</taxon>
        <taxon>Theropoda</taxon>
        <taxon>Coelurosauria</taxon>
        <taxon>Aves</taxon>
        <taxon>Neognathae</taxon>
        <taxon>Galloanserae</taxon>
        <taxon>Galliformes</taxon>
        <taxon>Numididae</taxon>
        <taxon>Numida</taxon>
    </lineage>
</organism>
<evidence type="ECO:0000250" key="1"/>
<evidence type="ECO:0000250" key="2">
    <source>
        <dbReference type="UniProtKB" id="P00157"/>
    </source>
</evidence>
<evidence type="ECO:0000255" key="3">
    <source>
        <dbReference type="PROSITE-ProRule" id="PRU00967"/>
    </source>
</evidence>
<evidence type="ECO:0000255" key="4">
    <source>
        <dbReference type="PROSITE-ProRule" id="PRU00968"/>
    </source>
</evidence>
<proteinExistence type="inferred from homology"/>
<sequence length="380" mass="42594">MAPNIRKSHPLLKMINNSLIDLPTPSNISAWWNFGSLLAVCFMTQIITGLLLAMHYTADTSLAFSSVAHTCRNVQYGWLIRNLHANGASFFFICIYLHIGRGLYYGSYLYKETWNTGVILLLTLMATAFVGYVLPWGQMSFWGATVITNLFSAIPYIGQTLVEWAWGGFSVDNPTLTRFFALHFLLPFVIAGITIIHLTFLHESGSNNPLGISSNSDKIPFHPYYSIKDILGLTLMLTPLLTLALFSPNLLGDPENFTPANPLVTPPHIKPEWYFLFAYAILRSIPNKLGGVLALAASVLILLLIPFLHKSKQRTMTFRPFSQLLFWLLVANLLILTWVGSQPVEHPFIIIGQLASLSYFTTLLILFPMIGTLENKMLNH</sequence>
<keyword id="KW-0249">Electron transport</keyword>
<keyword id="KW-0349">Heme</keyword>
<keyword id="KW-0408">Iron</keyword>
<keyword id="KW-0472">Membrane</keyword>
<keyword id="KW-0479">Metal-binding</keyword>
<keyword id="KW-0496">Mitochondrion</keyword>
<keyword id="KW-0999">Mitochondrion inner membrane</keyword>
<keyword id="KW-0679">Respiratory chain</keyword>
<keyword id="KW-0812">Transmembrane</keyword>
<keyword id="KW-1133">Transmembrane helix</keyword>
<keyword id="KW-0813">Transport</keyword>
<keyword id="KW-0830">Ubiquinone</keyword>
<reference key="1">
    <citation type="journal article" date="1993" name="J. Mol. Evol.">
        <title>Pathways of lysozyme evolution inferred from the sequences of cytochrome b in birds.</title>
        <authorList>
            <person name="Kornegay J.R."/>
            <person name="Kocher T.D."/>
            <person name="Williams L.A."/>
            <person name="Wilson A.C."/>
        </authorList>
    </citation>
    <scope>NUCLEOTIDE SEQUENCE [GENOMIC DNA]</scope>
    <source>
        <tissue>Muscle</tissue>
    </source>
</reference>